<sequence length="987" mass="108774">MATGFTRPAAAPKRPQRRLTWLIPLLMILGALVPTVVDLYTDWLWFGEVDFRGVFNKVIATRIGLFVGFGLLAGIVTFLAGWFTYRGRPDELEFFDPDSPVVQYRAAVEKGVHRFLVVLPVVIGIAAGFLGQQAWQTVQLFFNRQDFGVSDQQFGMDYGFYAFTLPALRLVVSTFSVLLVVAFLIALVGHYLLGGIRAGNQAAGVKGSITNYAKVQLAVTGGLYLLVRMASYWLDRYSLLNNSHETFTGGSYTDINAVLPAKIVLLVISAVVAISFFSVIVTKDLRIPAISTVLMIVSSLAIGNAWPIMMERFSVSPNRAEKESEYISRNIEATRYAYGITDDAVTYKDNWGAKGASSEKVASDSATVSNIRLLDPEIISPTFTQQQQLRNFYGFPKSLAMDRYVIDGELRDFVVAARELDPNALKENQRDWINRHTVYTHGNGIVAAQANQVDEVARDVGSARGGYPVYTVSDLQTTDKEAQELGIVVKEPRIYYGPVIASATDGADYAVVGSENDSSVEYDTDSSTYTYQGKGGVNIGNVINRAAFAMRYQELNLILSDRVNGNSKILYDRDPRERVHNVAPWLTTDSTTYPAVIDGRVKWIVDGYTTLTSLPYAERTSLSEATNDTTAQVGNSAQRLVTDNVGYIRNSVKAVVDSYDGSVDLYEFDENDPVLKAWKGVFPGTVKAKSEISEELMNHLRYPEDMFKVQRKMLARYHVDDARDFFTNDRFWSVPSDPSATEGQKDVAQPAYYVVAADPDTGKPSFQLITPFRGLQREYLAAHMSVSSDPDNYGKITVRVLPTDTLTQGPKQAQDTMMSSDQIASDRTLWKDTNDLFNGNLLTLPVGDGDILYVEPLYSQRKNQASAFPKLLRVLVSYQGKVGYAPTIAEALSQVGIDPKEAQDLGEAKGLKPESQNRDKPEDKEGKAPSTPSAPASGSGTTGEAIGKINDALNKLQSAKNGSNEEYGRALDELDKAVEEYRKVAGQ</sequence>
<feature type="chain" id="PRO_0000157716" description="UPF0182 protein DIP0733">
    <location>
        <begin position="1"/>
        <end position="987"/>
    </location>
</feature>
<feature type="transmembrane region" description="Helical" evidence="1">
    <location>
        <begin position="19"/>
        <end position="39"/>
    </location>
</feature>
<feature type="transmembrane region" description="Helical" evidence="1">
    <location>
        <begin position="63"/>
        <end position="83"/>
    </location>
</feature>
<feature type="transmembrane region" description="Helical" evidence="1">
    <location>
        <begin position="115"/>
        <end position="135"/>
    </location>
</feature>
<feature type="transmembrane region" description="Helical" evidence="1">
    <location>
        <begin position="176"/>
        <end position="196"/>
    </location>
</feature>
<feature type="transmembrane region" description="Helical" evidence="1">
    <location>
        <begin position="212"/>
        <end position="234"/>
    </location>
</feature>
<feature type="transmembrane region" description="Helical" evidence="1">
    <location>
        <begin position="261"/>
        <end position="281"/>
    </location>
</feature>
<feature type="transmembrane region" description="Helical" evidence="1">
    <location>
        <begin position="290"/>
        <end position="310"/>
    </location>
</feature>
<feature type="region of interest" description="Disordered" evidence="2">
    <location>
        <begin position="904"/>
        <end position="950"/>
    </location>
</feature>
<feature type="compositionally biased region" description="Basic and acidic residues" evidence="2">
    <location>
        <begin position="904"/>
        <end position="927"/>
    </location>
</feature>
<feature type="compositionally biased region" description="Low complexity" evidence="2">
    <location>
        <begin position="928"/>
        <end position="943"/>
    </location>
</feature>
<reference key="1">
    <citation type="journal article" date="2003" name="Nucleic Acids Res.">
        <title>The complete genome sequence and analysis of Corynebacterium diphtheriae NCTC13129.</title>
        <authorList>
            <person name="Cerdeno-Tarraga A.-M."/>
            <person name="Efstratiou A."/>
            <person name="Dover L.G."/>
            <person name="Holden M.T.G."/>
            <person name="Pallen M.J."/>
            <person name="Bentley S.D."/>
            <person name="Besra G.S."/>
            <person name="Churcher C.M."/>
            <person name="James K.D."/>
            <person name="De Zoysa A."/>
            <person name="Chillingworth T."/>
            <person name="Cronin A."/>
            <person name="Dowd L."/>
            <person name="Feltwell T."/>
            <person name="Hamlin N."/>
            <person name="Holroyd S."/>
            <person name="Jagels K."/>
            <person name="Moule S."/>
            <person name="Quail M.A."/>
            <person name="Rabbinowitsch E."/>
            <person name="Rutherford K.M."/>
            <person name="Thomson N.R."/>
            <person name="Unwin L."/>
            <person name="Whitehead S."/>
            <person name="Barrell B.G."/>
            <person name="Parkhill J."/>
        </authorList>
    </citation>
    <scope>NUCLEOTIDE SEQUENCE [LARGE SCALE GENOMIC DNA]</scope>
    <source>
        <strain>ATCC 700971 / NCTC 13129 / Biotype gravis</strain>
    </source>
</reference>
<dbReference type="EMBL" id="BX248356">
    <property type="protein sequence ID" value="CAE49255.1"/>
    <property type="molecule type" value="Genomic_DNA"/>
</dbReference>
<dbReference type="RefSeq" id="WP_010934515.1">
    <property type="nucleotide sequence ID" value="NC_002935.2"/>
</dbReference>
<dbReference type="SMR" id="Q6NIN5"/>
<dbReference type="STRING" id="257309.DIP0733"/>
<dbReference type="KEGG" id="cdi:DIP0733"/>
<dbReference type="HOGENOM" id="CLU_007733_1_0_11"/>
<dbReference type="PHI-base" id="PHI:7592"/>
<dbReference type="PHI-base" id="PHI:8376"/>
<dbReference type="Proteomes" id="UP000002198">
    <property type="component" value="Chromosome"/>
</dbReference>
<dbReference type="GO" id="GO:0005576">
    <property type="term" value="C:extracellular region"/>
    <property type="evidence" value="ECO:0007669"/>
    <property type="project" value="TreeGrafter"/>
</dbReference>
<dbReference type="GO" id="GO:0005886">
    <property type="term" value="C:plasma membrane"/>
    <property type="evidence" value="ECO:0007669"/>
    <property type="project" value="UniProtKB-SubCell"/>
</dbReference>
<dbReference type="HAMAP" id="MF_01600">
    <property type="entry name" value="UPF0182"/>
    <property type="match status" value="1"/>
</dbReference>
<dbReference type="InterPro" id="IPR005372">
    <property type="entry name" value="UPF0182"/>
</dbReference>
<dbReference type="NCBIfam" id="NF000825">
    <property type="entry name" value="PRK00068.1"/>
    <property type="match status" value="1"/>
</dbReference>
<dbReference type="PANTHER" id="PTHR39344">
    <property type="entry name" value="UPF0182 PROTEIN SLL1060"/>
    <property type="match status" value="1"/>
</dbReference>
<dbReference type="PANTHER" id="PTHR39344:SF1">
    <property type="entry name" value="UPF0182 PROTEIN SLL1060"/>
    <property type="match status" value="1"/>
</dbReference>
<dbReference type="Pfam" id="PF03699">
    <property type="entry name" value="UPF0182"/>
    <property type="match status" value="1"/>
</dbReference>
<proteinExistence type="inferred from homology"/>
<name>Y733_CORDI</name>
<protein>
    <recommendedName>
        <fullName evidence="1">UPF0182 protein DIP0733</fullName>
    </recommendedName>
</protein>
<gene>
    <name type="ordered locus">DIP0733</name>
</gene>
<accession>Q6NIN5</accession>
<evidence type="ECO:0000255" key="1">
    <source>
        <dbReference type="HAMAP-Rule" id="MF_01600"/>
    </source>
</evidence>
<evidence type="ECO:0000256" key="2">
    <source>
        <dbReference type="SAM" id="MobiDB-lite"/>
    </source>
</evidence>
<keyword id="KW-1003">Cell membrane</keyword>
<keyword id="KW-0472">Membrane</keyword>
<keyword id="KW-1185">Reference proteome</keyword>
<keyword id="KW-0812">Transmembrane</keyword>
<keyword id="KW-1133">Transmembrane helix</keyword>
<comment type="subcellular location">
    <subcellularLocation>
        <location evidence="1">Cell membrane</location>
        <topology evidence="1">Multi-pass membrane protein</topology>
    </subcellularLocation>
</comment>
<comment type="similarity">
    <text evidence="1">Belongs to the UPF0182 family.</text>
</comment>
<organism>
    <name type="scientific">Corynebacterium diphtheriae (strain ATCC 700971 / NCTC 13129 / Biotype gravis)</name>
    <dbReference type="NCBI Taxonomy" id="257309"/>
    <lineage>
        <taxon>Bacteria</taxon>
        <taxon>Bacillati</taxon>
        <taxon>Actinomycetota</taxon>
        <taxon>Actinomycetes</taxon>
        <taxon>Mycobacteriales</taxon>
        <taxon>Corynebacteriaceae</taxon>
        <taxon>Corynebacterium</taxon>
    </lineage>
</organism>